<keyword id="KW-0067">ATP-binding</keyword>
<keyword id="KW-0963">Cytoplasm</keyword>
<keyword id="KW-0227">DNA damage</keyword>
<keyword id="KW-0228">DNA excision</keyword>
<keyword id="KW-0234">DNA repair</keyword>
<keyword id="KW-0267">Excision nuclease</keyword>
<keyword id="KW-0547">Nucleotide-binding</keyword>
<keyword id="KW-0742">SOS response</keyword>
<protein>
    <recommendedName>
        <fullName evidence="1">UvrABC system protein B</fullName>
        <shortName evidence="1">Protein UvrB</shortName>
    </recommendedName>
    <alternativeName>
        <fullName evidence="1">Excinuclease ABC subunit B</fullName>
    </alternativeName>
</protein>
<dbReference type="EMBL" id="BX569689">
    <property type="protein sequence ID" value="CAE06592.1"/>
    <property type="molecule type" value="Genomic_DNA"/>
</dbReference>
<dbReference type="RefSeq" id="WP_011126955.1">
    <property type="nucleotide sequence ID" value="NC_005070.1"/>
</dbReference>
<dbReference type="SMR" id="Q7UA24"/>
<dbReference type="STRING" id="84588.SYNW0077"/>
<dbReference type="KEGG" id="syw:SYNW0077"/>
<dbReference type="eggNOG" id="COG0556">
    <property type="taxonomic scope" value="Bacteria"/>
</dbReference>
<dbReference type="HOGENOM" id="CLU_009621_2_1_3"/>
<dbReference type="Proteomes" id="UP000001422">
    <property type="component" value="Chromosome"/>
</dbReference>
<dbReference type="GO" id="GO:0005737">
    <property type="term" value="C:cytoplasm"/>
    <property type="evidence" value="ECO:0007669"/>
    <property type="project" value="UniProtKB-SubCell"/>
</dbReference>
<dbReference type="GO" id="GO:0009380">
    <property type="term" value="C:excinuclease repair complex"/>
    <property type="evidence" value="ECO:0007669"/>
    <property type="project" value="InterPro"/>
</dbReference>
<dbReference type="GO" id="GO:0005524">
    <property type="term" value="F:ATP binding"/>
    <property type="evidence" value="ECO:0007669"/>
    <property type="project" value="UniProtKB-UniRule"/>
</dbReference>
<dbReference type="GO" id="GO:0016887">
    <property type="term" value="F:ATP hydrolysis activity"/>
    <property type="evidence" value="ECO:0007669"/>
    <property type="project" value="InterPro"/>
</dbReference>
<dbReference type="GO" id="GO:0003677">
    <property type="term" value="F:DNA binding"/>
    <property type="evidence" value="ECO:0007669"/>
    <property type="project" value="UniProtKB-UniRule"/>
</dbReference>
<dbReference type="GO" id="GO:0009381">
    <property type="term" value="F:excinuclease ABC activity"/>
    <property type="evidence" value="ECO:0007669"/>
    <property type="project" value="UniProtKB-UniRule"/>
</dbReference>
<dbReference type="GO" id="GO:0006289">
    <property type="term" value="P:nucleotide-excision repair"/>
    <property type="evidence" value="ECO:0007669"/>
    <property type="project" value="UniProtKB-UniRule"/>
</dbReference>
<dbReference type="GO" id="GO:0009432">
    <property type="term" value="P:SOS response"/>
    <property type="evidence" value="ECO:0007669"/>
    <property type="project" value="UniProtKB-UniRule"/>
</dbReference>
<dbReference type="CDD" id="cd17916">
    <property type="entry name" value="DEXHc_UvrB"/>
    <property type="match status" value="1"/>
</dbReference>
<dbReference type="CDD" id="cd18790">
    <property type="entry name" value="SF2_C_UvrB"/>
    <property type="match status" value="1"/>
</dbReference>
<dbReference type="Gene3D" id="3.40.50.300">
    <property type="entry name" value="P-loop containing nucleotide triphosphate hydrolases"/>
    <property type="match status" value="3"/>
</dbReference>
<dbReference type="Gene3D" id="4.10.860.10">
    <property type="entry name" value="UVR domain"/>
    <property type="match status" value="1"/>
</dbReference>
<dbReference type="HAMAP" id="MF_00204">
    <property type="entry name" value="UvrB"/>
    <property type="match status" value="1"/>
</dbReference>
<dbReference type="InterPro" id="IPR006935">
    <property type="entry name" value="Helicase/UvrB_N"/>
</dbReference>
<dbReference type="InterPro" id="IPR014001">
    <property type="entry name" value="Helicase_ATP-bd"/>
</dbReference>
<dbReference type="InterPro" id="IPR001650">
    <property type="entry name" value="Helicase_C-like"/>
</dbReference>
<dbReference type="InterPro" id="IPR027417">
    <property type="entry name" value="P-loop_NTPase"/>
</dbReference>
<dbReference type="InterPro" id="IPR001943">
    <property type="entry name" value="UVR_dom"/>
</dbReference>
<dbReference type="InterPro" id="IPR036876">
    <property type="entry name" value="UVR_dom_sf"/>
</dbReference>
<dbReference type="InterPro" id="IPR004807">
    <property type="entry name" value="UvrB"/>
</dbReference>
<dbReference type="InterPro" id="IPR041471">
    <property type="entry name" value="UvrB_inter"/>
</dbReference>
<dbReference type="InterPro" id="IPR024759">
    <property type="entry name" value="UvrB_YAD/RRR_dom"/>
</dbReference>
<dbReference type="NCBIfam" id="NF003673">
    <property type="entry name" value="PRK05298.1"/>
    <property type="match status" value="1"/>
</dbReference>
<dbReference type="NCBIfam" id="TIGR00631">
    <property type="entry name" value="uvrb"/>
    <property type="match status" value="1"/>
</dbReference>
<dbReference type="PANTHER" id="PTHR24029">
    <property type="entry name" value="UVRABC SYSTEM PROTEIN B"/>
    <property type="match status" value="1"/>
</dbReference>
<dbReference type="PANTHER" id="PTHR24029:SF0">
    <property type="entry name" value="UVRABC SYSTEM PROTEIN B"/>
    <property type="match status" value="1"/>
</dbReference>
<dbReference type="Pfam" id="PF00271">
    <property type="entry name" value="Helicase_C"/>
    <property type="match status" value="1"/>
</dbReference>
<dbReference type="Pfam" id="PF04851">
    <property type="entry name" value="ResIII"/>
    <property type="match status" value="1"/>
</dbReference>
<dbReference type="Pfam" id="PF02151">
    <property type="entry name" value="UVR"/>
    <property type="match status" value="1"/>
</dbReference>
<dbReference type="Pfam" id="PF12344">
    <property type="entry name" value="UvrB"/>
    <property type="match status" value="1"/>
</dbReference>
<dbReference type="Pfam" id="PF17757">
    <property type="entry name" value="UvrB_inter"/>
    <property type="match status" value="1"/>
</dbReference>
<dbReference type="SMART" id="SM00487">
    <property type="entry name" value="DEXDc"/>
    <property type="match status" value="1"/>
</dbReference>
<dbReference type="SMART" id="SM00490">
    <property type="entry name" value="HELICc"/>
    <property type="match status" value="1"/>
</dbReference>
<dbReference type="SUPFAM" id="SSF46600">
    <property type="entry name" value="C-terminal UvrC-binding domain of UvrB"/>
    <property type="match status" value="1"/>
</dbReference>
<dbReference type="SUPFAM" id="SSF52540">
    <property type="entry name" value="P-loop containing nucleoside triphosphate hydrolases"/>
    <property type="match status" value="2"/>
</dbReference>
<dbReference type="PROSITE" id="PS51192">
    <property type="entry name" value="HELICASE_ATP_BIND_1"/>
    <property type="match status" value="1"/>
</dbReference>
<dbReference type="PROSITE" id="PS51194">
    <property type="entry name" value="HELICASE_CTER"/>
    <property type="match status" value="1"/>
</dbReference>
<dbReference type="PROSITE" id="PS50151">
    <property type="entry name" value="UVR"/>
    <property type="match status" value="1"/>
</dbReference>
<accession>Q7UA24</accession>
<organism>
    <name type="scientific">Parasynechococcus marenigrum (strain WH8102)</name>
    <dbReference type="NCBI Taxonomy" id="84588"/>
    <lineage>
        <taxon>Bacteria</taxon>
        <taxon>Bacillati</taxon>
        <taxon>Cyanobacteriota</taxon>
        <taxon>Cyanophyceae</taxon>
        <taxon>Synechococcales</taxon>
        <taxon>Prochlorococcaceae</taxon>
        <taxon>Parasynechococcus</taxon>
        <taxon>Parasynechococcus marenigrum</taxon>
    </lineage>
</organism>
<reference key="1">
    <citation type="journal article" date="2003" name="Nature">
        <title>The genome of a motile marine Synechococcus.</title>
        <authorList>
            <person name="Palenik B."/>
            <person name="Brahamsha B."/>
            <person name="Larimer F.W."/>
            <person name="Land M.L."/>
            <person name="Hauser L."/>
            <person name="Chain P."/>
            <person name="Lamerdin J.E."/>
            <person name="Regala W."/>
            <person name="Allen E.E."/>
            <person name="McCarren J."/>
            <person name="Paulsen I.T."/>
            <person name="Dufresne A."/>
            <person name="Partensky F."/>
            <person name="Webb E.A."/>
            <person name="Waterbury J."/>
        </authorList>
    </citation>
    <scope>NUCLEOTIDE SEQUENCE [LARGE SCALE GENOMIC DNA]</scope>
    <source>
        <strain>WH8102</strain>
    </source>
</reference>
<name>UVRB_PARMW</name>
<proteinExistence type="inferred from homology"/>
<comment type="function">
    <text evidence="1">The UvrABC repair system catalyzes the recognition and processing of DNA lesions. A damage recognition complex composed of 2 UvrA and 2 UvrB subunits scans DNA for abnormalities. Upon binding of the UvrA(2)B(2) complex to a putative damaged site, the DNA wraps around one UvrB monomer. DNA wrap is dependent on ATP binding by UvrB and probably causes local melting of the DNA helix, facilitating insertion of UvrB beta-hairpin between the DNA strands. Then UvrB probes one DNA strand for the presence of a lesion. If a lesion is found the UvrA subunits dissociate and the UvrB-DNA preincision complex is formed. This complex is subsequently bound by UvrC and the second UvrB is released. If no lesion is found, the DNA wraps around the other UvrB subunit that will check the other stand for damage.</text>
</comment>
<comment type="subunit">
    <text evidence="1">Forms a heterotetramer with UvrA during the search for lesions. Interacts with UvrC in an incision complex.</text>
</comment>
<comment type="subcellular location">
    <subcellularLocation>
        <location evidence="1">Cytoplasm</location>
    </subcellularLocation>
</comment>
<comment type="domain">
    <text evidence="1">The beta-hairpin motif is involved in DNA binding.</text>
</comment>
<comment type="similarity">
    <text evidence="1">Belongs to the UvrB family.</text>
</comment>
<sequence>MPAYDLTAPYTPKGDQPTAIKQLVQGVNGGERYQTLLGATGTGKTFTMANVIAQTGRPALVLAHNKTLAAQLCNELREFFPENAVEYFISYYDYYQPEAYVPVSDTYIAKTASINEEIDMLRHSATRSLFERRDVIVVASISCIYGLGIPSEYLKAAVKFEVGETLNIRSQLRELVNNQYSRNDTEIARGRFRMKGDVLEIGPAYEDRLVRIELFGDEVEAIRYVDPTTGEILQSLETVNIYPAKHFVTPKDRLDSAIGEIRQELRDRLDFLNGEGKLLEAQRLEQRTKYDLEMLGQVGYCNGVENYARHLAGREEGTPPECLIDYFPKDWLLIVDESHVTCSQLQAMYNGDQARKKVLIEHGFRLPSAADNRPLKGEEFWEKAHQTVFVSATPGNWELEVSGGEVAQQVIRPTGVLDPIVEVRPTTGQVDDLLGEIRDRASKQQRVLVTTLTKRMAEDLTDYLAENEVRVRYLHSEIHSIERIEIIQDLRLGEYDVLVGVNLLREGLDLPEVSLVAILDADKEGFLRAERSLIQTIGRAARHVEGVALLYADNMTESMAKAISETERRRKIQQTYNEKHGIVPTAAGKKASNSILSFLELSRKLKQDGPDADLVQVAGKAAQALEEDPDAGLALEALPELIDQLEGKMKEAAKKLDFEDAANLRDRIKQLRQKMAG</sequence>
<evidence type="ECO:0000255" key="1">
    <source>
        <dbReference type="HAMAP-Rule" id="MF_00204"/>
    </source>
</evidence>
<gene>
    <name evidence="1" type="primary">uvrB</name>
    <name type="ordered locus">SYNW0077</name>
</gene>
<feature type="chain" id="PRO_0000227376" description="UvrABC system protein B">
    <location>
        <begin position="1"/>
        <end position="677"/>
    </location>
</feature>
<feature type="domain" description="Helicase ATP-binding" evidence="1">
    <location>
        <begin position="25"/>
        <end position="412"/>
    </location>
</feature>
<feature type="domain" description="Helicase C-terminal" evidence="1">
    <location>
        <begin position="429"/>
        <end position="591"/>
    </location>
</feature>
<feature type="domain" description="UVR" evidence="1">
    <location>
        <begin position="639"/>
        <end position="674"/>
    </location>
</feature>
<feature type="short sequence motif" description="Beta-hairpin">
    <location>
        <begin position="91"/>
        <end position="114"/>
    </location>
</feature>
<feature type="binding site" evidence="1">
    <location>
        <begin position="38"/>
        <end position="45"/>
    </location>
    <ligand>
        <name>ATP</name>
        <dbReference type="ChEBI" id="CHEBI:30616"/>
    </ligand>
</feature>